<dbReference type="EC" id="2.1.3.-" evidence="1"/>
<dbReference type="EMBL" id="CP000970">
    <property type="protein sequence ID" value="ACB20064.1"/>
    <property type="molecule type" value="Genomic_DNA"/>
</dbReference>
<dbReference type="RefSeq" id="WP_000019588.1">
    <property type="nucleotide sequence ID" value="NC_010498.1"/>
</dbReference>
<dbReference type="SMR" id="B1LD01"/>
<dbReference type="GeneID" id="75202724"/>
<dbReference type="KEGG" id="ecm:EcSMS35_1316"/>
<dbReference type="HOGENOM" id="CLU_078475_0_0_6"/>
<dbReference type="Proteomes" id="UP000007011">
    <property type="component" value="Chromosome"/>
</dbReference>
<dbReference type="GO" id="GO:0016743">
    <property type="term" value="F:carboxyl- or carbamoyltransferase activity"/>
    <property type="evidence" value="ECO:0007669"/>
    <property type="project" value="UniProtKB-UniRule"/>
</dbReference>
<dbReference type="GO" id="GO:1904047">
    <property type="term" value="F:S-adenosyl-L-methionine binding"/>
    <property type="evidence" value="ECO:0007669"/>
    <property type="project" value="UniProtKB-UniRule"/>
</dbReference>
<dbReference type="GO" id="GO:0002098">
    <property type="term" value="P:tRNA wobble uridine modification"/>
    <property type="evidence" value="ECO:0007669"/>
    <property type="project" value="InterPro"/>
</dbReference>
<dbReference type="CDD" id="cd02440">
    <property type="entry name" value="AdoMet_MTases"/>
    <property type="match status" value="1"/>
</dbReference>
<dbReference type="FunFam" id="3.40.50.150:FF:000030">
    <property type="entry name" value="Carboxy-S-adenosyl-L-methionine synthase"/>
    <property type="match status" value="1"/>
</dbReference>
<dbReference type="Gene3D" id="3.40.50.150">
    <property type="entry name" value="Vaccinia Virus protein VP39"/>
    <property type="match status" value="1"/>
</dbReference>
<dbReference type="HAMAP" id="MF_01589">
    <property type="entry name" value="Cx_SAM_synthase"/>
    <property type="match status" value="1"/>
</dbReference>
<dbReference type="InterPro" id="IPR005271">
    <property type="entry name" value="CmoA"/>
</dbReference>
<dbReference type="InterPro" id="IPR041698">
    <property type="entry name" value="Methyltransf_25"/>
</dbReference>
<dbReference type="InterPro" id="IPR029063">
    <property type="entry name" value="SAM-dependent_MTases_sf"/>
</dbReference>
<dbReference type="NCBIfam" id="TIGR00740">
    <property type="entry name" value="carboxy-S-adenosyl-L-methionine synthase CmoA"/>
    <property type="match status" value="1"/>
</dbReference>
<dbReference type="NCBIfam" id="NF011995">
    <property type="entry name" value="PRK15451.1"/>
    <property type="match status" value="1"/>
</dbReference>
<dbReference type="PANTHER" id="PTHR43861:SF2">
    <property type="entry name" value="CARBOXY-S-ADENOSYL-L-METHIONINE SYNTHASE"/>
    <property type="match status" value="1"/>
</dbReference>
<dbReference type="PANTHER" id="PTHR43861">
    <property type="entry name" value="TRANS-ACONITATE 2-METHYLTRANSFERASE-RELATED"/>
    <property type="match status" value="1"/>
</dbReference>
<dbReference type="Pfam" id="PF13649">
    <property type="entry name" value="Methyltransf_25"/>
    <property type="match status" value="1"/>
</dbReference>
<dbReference type="PIRSF" id="PIRSF006325">
    <property type="entry name" value="MeTrfase_bac"/>
    <property type="match status" value="1"/>
</dbReference>
<dbReference type="SUPFAM" id="SSF53335">
    <property type="entry name" value="S-adenosyl-L-methionine-dependent methyltransferases"/>
    <property type="match status" value="1"/>
</dbReference>
<proteinExistence type="inferred from homology"/>
<evidence type="ECO:0000255" key="1">
    <source>
        <dbReference type="HAMAP-Rule" id="MF_01589"/>
    </source>
</evidence>
<feature type="chain" id="PRO_1000201348" description="Carboxy-S-adenosyl-L-methionine synthase">
    <location>
        <begin position="1"/>
        <end position="247"/>
    </location>
</feature>
<feature type="binding site" evidence="1">
    <location>
        <position position="39"/>
    </location>
    <ligand>
        <name>S-adenosyl-L-methionine</name>
        <dbReference type="ChEBI" id="CHEBI:59789"/>
    </ligand>
</feature>
<feature type="binding site" evidence="1">
    <location>
        <begin position="64"/>
        <end position="66"/>
    </location>
    <ligand>
        <name>S-adenosyl-L-methionine</name>
        <dbReference type="ChEBI" id="CHEBI:59789"/>
    </ligand>
</feature>
<feature type="binding site" evidence="1">
    <location>
        <begin position="89"/>
        <end position="90"/>
    </location>
    <ligand>
        <name>S-adenosyl-L-methionine</name>
        <dbReference type="ChEBI" id="CHEBI:59789"/>
    </ligand>
</feature>
<feature type="binding site" evidence="1">
    <location>
        <begin position="117"/>
        <end position="118"/>
    </location>
    <ligand>
        <name>S-adenosyl-L-methionine</name>
        <dbReference type="ChEBI" id="CHEBI:59789"/>
    </ligand>
</feature>
<feature type="binding site" evidence="1">
    <location>
        <position position="132"/>
    </location>
    <ligand>
        <name>S-adenosyl-L-methionine</name>
        <dbReference type="ChEBI" id="CHEBI:59789"/>
    </ligand>
</feature>
<feature type="binding site" evidence="1">
    <location>
        <position position="199"/>
    </location>
    <ligand>
        <name>S-adenosyl-L-methionine</name>
        <dbReference type="ChEBI" id="CHEBI:59789"/>
    </ligand>
</feature>
<name>CMOA_ECOSM</name>
<gene>
    <name evidence="1" type="primary">cmoA</name>
    <name type="ordered locus">EcSMS35_1316</name>
</gene>
<comment type="function">
    <text evidence="1">Catalyzes the conversion of S-adenosyl-L-methionine (SAM) to carboxy-S-adenosyl-L-methionine (Cx-SAM).</text>
</comment>
<comment type="catalytic activity">
    <reaction evidence="1">
        <text>prephenate + S-adenosyl-L-methionine = carboxy-S-adenosyl-L-methionine + 3-phenylpyruvate + H2O</text>
        <dbReference type="Rhea" id="RHEA:51692"/>
        <dbReference type="ChEBI" id="CHEBI:15377"/>
        <dbReference type="ChEBI" id="CHEBI:18005"/>
        <dbReference type="ChEBI" id="CHEBI:29934"/>
        <dbReference type="ChEBI" id="CHEBI:59789"/>
        <dbReference type="ChEBI" id="CHEBI:134278"/>
    </reaction>
</comment>
<comment type="subunit">
    <text evidence="1">Homodimer.</text>
</comment>
<comment type="similarity">
    <text evidence="1">Belongs to the class I-like SAM-binding methyltransferase superfamily. Cx-SAM synthase family.</text>
</comment>
<protein>
    <recommendedName>
        <fullName evidence="1">Carboxy-S-adenosyl-L-methionine synthase</fullName>
        <shortName evidence="1">Cx-SAM synthase</shortName>
        <ecNumber evidence="1">2.1.3.-</ecNumber>
    </recommendedName>
</protein>
<sequence length="247" mass="27791">MSHRDTLFSAPIARLGDWTFDERVAEVFPDMIQRSVPGYSNIISMIGMLAERFVQPGTQVYDLGCSLGAATLSVRRNIHHDNCKIIAIDNSPAMIERCRRHIDAYKAPTPVDVIEGDIRDIAIENASMVVLNFTLQFLEPSERQALLDKIYQGLNPGGALVLSEKFSFEDAKVGELLFNMHHDFKRANGYSELEISQKRSMLENVMLTDSVETHKARLHKAGFEHSELWFQCFNFGSLVALKAEDAA</sequence>
<keyword id="KW-0949">S-adenosyl-L-methionine</keyword>
<keyword id="KW-0808">Transferase</keyword>
<accession>B1LD01</accession>
<organism>
    <name type="scientific">Escherichia coli (strain SMS-3-5 / SECEC)</name>
    <dbReference type="NCBI Taxonomy" id="439855"/>
    <lineage>
        <taxon>Bacteria</taxon>
        <taxon>Pseudomonadati</taxon>
        <taxon>Pseudomonadota</taxon>
        <taxon>Gammaproteobacteria</taxon>
        <taxon>Enterobacterales</taxon>
        <taxon>Enterobacteriaceae</taxon>
        <taxon>Escherichia</taxon>
    </lineage>
</organism>
<reference key="1">
    <citation type="journal article" date="2008" name="J. Bacteriol.">
        <title>Insights into the environmental resistance gene pool from the genome sequence of the multidrug-resistant environmental isolate Escherichia coli SMS-3-5.</title>
        <authorList>
            <person name="Fricke W.F."/>
            <person name="Wright M.S."/>
            <person name="Lindell A.H."/>
            <person name="Harkins D.M."/>
            <person name="Baker-Austin C."/>
            <person name="Ravel J."/>
            <person name="Stepanauskas R."/>
        </authorList>
    </citation>
    <scope>NUCLEOTIDE SEQUENCE [LARGE SCALE GENOMIC DNA]</scope>
    <source>
        <strain>SMS-3-5 / SECEC</strain>
    </source>
</reference>